<name>YDGT_SALTY</name>
<evidence type="ECO:0000250" key="1"/>
<evidence type="ECO:0000250" key="2">
    <source>
        <dbReference type="UniProtKB" id="A0A0H3NGF1"/>
    </source>
</evidence>
<evidence type="ECO:0000250" key="3">
    <source>
        <dbReference type="UniProtKB" id="P64467"/>
    </source>
</evidence>
<evidence type="ECO:0000269" key="4">
    <source>
    </source>
</evidence>
<evidence type="ECO:0000305" key="5"/>
<accession>Q7CQK5</accession>
<gene>
    <name type="primary">ydgT</name>
    <name type="synonym">cnu</name>
    <name type="ordered locus">STM1461</name>
</gene>
<reference key="1">
    <citation type="journal article" date="2001" name="Nature">
        <title>Complete genome sequence of Salmonella enterica serovar Typhimurium LT2.</title>
        <authorList>
            <person name="McClelland M."/>
            <person name="Sanderson K.E."/>
            <person name="Spieth J."/>
            <person name="Clifton S.W."/>
            <person name="Latreille P."/>
            <person name="Courtney L."/>
            <person name="Porwollik S."/>
            <person name="Ali J."/>
            <person name="Dante M."/>
            <person name="Du F."/>
            <person name="Hou S."/>
            <person name="Layman D."/>
            <person name="Leonard S."/>
            <person name="Nguyen C."/>
            <person name="Scott K."/>
            <person name="Holmes A."/>
            <person name="Grewal N."/>
            <person name="Mulvaney E."/>
            <person name="Ryan E."/>
            <person name="Sun H."/>
            <person name="Florea L."/>
            <person name="Miller W."/>
            <person name="Stoneking T."/>
            <person name="Nhan M."/>
            <person name="Waterston R."/>
            <person name="Wilson R.K."/>
        </authorList>
    </citation>
    <scope>NUCLEOTIDE SEQUENCE [LARGE SCALE GENOMIC DNA]</scope>
    <source>
        <strain>LT2 / SGSC1412 / ATCC 700720</strain>
    </source>
</reference>
<reference key="2">
    <citation type="journal article" date="2013" name="J. Biol. Chem.">
        <title>Structural insights into the regulation of foreign genes in Salmonella by the Hha/H-NS complex.</title>
        <authorList>
            <person name="Ali S.S."/>
            <person name="Whitney J.C."/>
            <person name="Stevenson J."/>
            <person name="Robinson H."/>
            <person name="Howell P.L."/>
            <person name="Navarre W.W."/>
        </authorList>
    </citation>
    <scope>SUBUNIT</scope>
    <source>
        <strain>LT2 / SGSC1412 / ATCC 700720</strain>
    </source>
</reference>
<feature type="chain" id="PRO_0000201738" description="Transcription modulator YdgT">
    <location>
        <begin position="1"/>
        <end position="71"/>
    </location>
</feature>
<feature type="site" description="Interacts with H-NS" evidence="1">
    <location>
        <position position="44"/>
    </location>
</feature>
<comment type="function">
    <text evidence="2 3">Binds to H-NS and modified the range of genes it silences; H-NS alonge silences core gene while the H-NS-Hha complex (and presumably also H-NS-YdgT) silences genes acquired by horizontal gene transfer. Plays a role silencing virulence factors in the absence of factors that induce pathogenicity (By similarity). The complex formed with H-NS binds to the specific 26-bp cnb site in the origin of replication oriC (By similarity).</text>
</comment>
<comment type="subunit">
    <text evidence="3 4">Forms complexes with both H-NS (PubMed:23515315) and StpA (By similarity).</text>
</comment>
<comment type="similarity">
    <text evidence="5">Belongs to the Hha/YmoA/Cnu family.</text>
</comment>
<proteinExistence type="evidence at protein level"/>
<organism>
    <name type="scientific">Salmonella typhimurium (strain LT2 / SGSC1412 / ATCC 700720)</name>
    <dbReference type="NCBI Taxonomy" id="99287"/>
    <lineage>
        <taxon>Bacteria</taxon>
        <taxon>Pseudomonadati</taxon>
        <taxon>Pseudomonadota</taxon>
        <taxon>Gammaproteobacteria</taxon>
        <taxon>Enterobacterales</taxon>
        <taxon>Enterobacteriaceae</taxon>
        <taxon>Salmonella</taxon>
    </lineage>
</organism>
<sequence>MTVQDYLLKFRKISSLESLEKLFDHLNYTLTDDMDIVNMYRAADHRRAELVSGGRLFDVGQVPQSVWRYVQ</sequence>
<keyword id="KW-0238">DNA-binding</keyword>
<keyword id="KW-1185">Reference proteome</keyword>
<dbReference type="EMBL" id="AE006468">
    <property type="protein sequence ID" value="AAL20383.1"/>
    <property type="molecule type" value="Genomic_DNA"/>
</dbReference>
<dbReference type="RefSeq" id="NP_460424.3">
    <property type="nucleotide sequence ID" value="NC_003197.2"/>
</dbReference>
<dbReference type="RefSeq" id="WP_000217946.1">
    <property type="nucleotide sequence ID" value="NC_003197.2"/>
</dbReference>
<dbReference type="SMR" id="Q7CQK5"/>
<dbReference type="STRING" id="99287.STM1461"/>
<dbReference type="PaxDb" id="99287-STM1461"/>
<dbReference type="GeneID" id="1252979"/>
<dbReference type="GeneID" id="66755902"/>
<dbReference type="KEGG" id="stm:STM1461"/>
<dbReference type="PATRIC" id="fig|99287.12.peg.1544"/>
<dbReference type="HOGENOM" id="CLU_190629_0_0_6"/>
<dbReference type="PhylomeDB" id="Q7CQK5"/>
<dbReference type="BioCyc" id="SENT99287:STM1461-MONOMER"/>
<dbReference type="Proteomes" id="UP000001014">
    <property type="component" value="Chromosome"/>
</dbReference>
<dbReference type="GO" id="GO:0003677">
    <property type="term" value="F:DNA binding"/>
    <property type="evidence" value="ECO:0007669"/>
    <property type="project" value="UniProtKB-KW"/>
</dbReference>
<dbReference type="Gene3D" id="1.20.1280.40">
    <property type="entry name" value="HHA"/>
    <property type="match status" value="1"/>
</dbReference>
<dbReference type="InterPro" id="IPR007985">
    <property type="entry name" value="Hemolysn_expr_modulating_HHA"/>
</dbReference>
<dbReference type="InterPro" id="IPR036666">
    <property type="entry name" value="HHA_sf"/>
</dbReference>
<dbReference type="NCBIfam" id="NF007703">
    <property type="entry name" value="PRK10391.1"/>
    <property type="match status" value="1"/>
</dbReference>
<dbReference type="Pfam" id="PF05321">
    <property type="entry name" value="HHA"/>
    <property type="match status" value="1"/>
</dbReference>
<dbReference type="SUPFAM" id="SSF68989">
    <property type="entry name" value="Hemolysin expression modulating protein HHA"/>
    <property type="match status" value="1"/>
</dbReference>
<protein>
    <recommendedName>
        <fullName>Transcription modulator YdgT</fullName>
    </recommendedName>
    <alternativeName>
        <fullName>H-NS/StpA-binding protein 2</fullName>
    </alternativeName>
    <alternativeName>
        <fullName>OriC-binding nucleoid-associated protein</fullName>
    </alternativeName>
</protein>